<accession>O35569</accession>
<accession>O35073</accession>
<accession>O35570</accession>
<accession>O35571</accession>
<accession>O35572</accession>
<comment type="function">
    <text>Direct ligand for ERBB3 and ERBB4 tyrosine kinase receptors. Concomitantly recruits ERBB1 and ERBB2 coreceptors, resulting in ligand-stimulated tyrosine phosphorylation and activation of the ERBB receptors. May also promote the heterodimerization with the EGF receptor.</text>
</comment>
<comment type="subunit">
    <text>Interacts with ERBB3 and ERBB4.</text>
</comment>
<comment type="subcellular location">
    <molecule>Pro-neuregulin-2, membrane-bound isoform</molecule>
    <subcellularLocation>
        <location evidence="1">Cell membrane</location>
        <topology evidence="1">Single-pass type I membrane protein</topology>
    </subcellularLocation>
    <text evidence="1">Does not seem to be active.</text>
</comment>
<comment type="subcellular location">
    <molecule>Neuregulin-2</molecule>
    <subcellularLocation>
        <location evidence="1">Secreted</location>
    </subcellularLocation>
</comment>
<comment type="alternative products">
    <event type="alternative splicing"/>
    <isoform>
        <id>O35569-1</id>
        <name>1</name>
        <name>NTAK-alpha1</name>
        <sequence type="displayed"/>
    </isoform>
    <isoform>
        <id>O35569-2</id>
        <name>2</name>
        <name>NTAK-alpha2A</name>
        <sequence type="described" ref="VSP_003471"/>
    </isoform>
    <isoform>
        <id>O35569-3</id>
        <name>3</name>
        <name>NTAK-alpha2B</name>
        <name>NTAK-alpha2-1P</name>
        <sequence type="described" ref="VSP_003466 VSP_003471"/>
    </isoform>
    <isoform>
        <id>O35569-4</id>
        <name>4</name>
        <name>NTAK-beta</name>
        <sequence type="described" ref="VSP_003470"/>
    </isoform>
    <isoform>
        <id>O35569-5</id>
        <name>5</name>
        <name>NTAK-gamma</name>
        <sequence type="described" ref="VSP_003467 VSP_003468"/>
    </isoform>
    <isoform>
        <id>O35569-6</id>
        <name>6</name>
        <name>NRG2-alpha</name>
        <sequence type="described" ref="VSP_003472 VSP_003473"/>
    </isoform>
    <isoform>
        <id>O35569-7</id>
        <name>7</name>
        <name>NRG2-beta</name>
        <sequence type="described" ref="VSP_003465 VSP_003469"/>
    </isoform>
    <text>Additional isoforms seem to exist. The alpha-type and beta-type differ in the EGF-like domain.</text>
</comment>
<comment type="tissue specificity">
    <text>Expressed in most parts of the brain, especially the olfactory bulb and cerebellum where it localizes in granule and Purkinje cells. In the hippocampus, found in the granule cells of the dentate gyrus. In the basal forebrain, found in the cholinergic cells. In the hindbrain, weakly detectable in the motor trigeminal nucleus. Not detected in the hypothalamus. Also found in the liver and in the thymus. Not detected in heart, adrenal gland, or testis.</text>
</comment>
<comment type="developmental stage">
    <text>Expressed in the brain of 11.5 dpc embryos where it is found in the telencephalon, but not in the hindbrain. Not found in the heart. In the adult, found in brain and thymus.</text>
</comment>
<comment type="domain">
    <text evidence="1">The cytoplasmic domain may be involved in the regulation of trafficking and proteolytic processing. Regulation of the proteolytic processing involves initial intracellular domain dimerization (By similarity).</text>
</comment>
<comment type="domain">
    <text evidence="1">ERBB receptor binding is elicited entirely by the EGF-like domain.</text>
</comment>
<comment type="PTM">
    <text evidence="1">Proteolytic cleavage close to the plasma membrane on the external face leads to the release of the soluble growth factor form.</text>
</comment>
<comment type="PTM">
    <text evidence="1">Extensive glycosylation precedes the proteolytic cleavage.</text>
</comment>
<comment type="similarity">
    <text evidence="7">Belongs to the neuregulin family.</text>
</comment>
<proteinExistence type="evidence at protein level"/>
<evidence type="ECO:0000250" key="1"/>
<evidence type="ECO:0000255" key="2"/>
<evidence type="ECO:0000255" key="3">
    <source>
        <dbReference type="PROSITE-ProRule" id="PRU00076"/>
    </source>
</evidence>
<evidence type="ECO:0000256" key="4">
    <source>
        <dbReference type="SAM" id="MobiDB-lite"/>
    </source>
</evidence>
<evidence type="ECO:0000269" key="5">
    <source>
    </source>
</evidence>
<evidence type="ECO:0000303" key="6">
    <source>
    </source>
</evidence>
<evidence type="ECO:0000305" key="7"/>
<keyword id="KW-0025">Alternative splicing</keyword>
<keyword id="KW-1003">Cell membrane</keyword>
<keyword id="KW-0903">Direct protein sequencing</keyword>
<keyword id="KW-1015">Disulfide bond</keyword>
<keyword id="KW-0245">EGF-like domain</keyword>
<keyword id="KW-0325">Glycoprotein</keyword>
<keyword id="KW-0339">Growth factor</keyword>
<keyword id="KW-0393">Immunoglobulin domain</keyword>
<keyword id="KW-0472">Membrane</keyword>
<keyword id="KW-1185">Reference proteome</keyword>
<keyword id="KW-0964">Secreted</keyword>
<keyword id="KW-0812">Transmembrane</keyword>
<keyword id="KW-1133">Transmembrane helix</keyword>
<feature type="propeptide" id="PRO_0000019478" evidence="5">
    <location>
        <begin position="1"/>
        <end position="127"/>
    </location>
</feature>
<feature type="chain" id="PRO_0000019479" description="Pro-neuregulin-2, membrane-bound isoform">
    <location>
        <begin position="128"/>
        <end position="868"/>
    </location>
</feature>
<feature type="chain" id="PRO_0000019480" description="Neuregulin-2">
    <location>
        <begin position="128"/>
        <end position="428"/>
    </location>
</feature>
<feature type="topological domain" description="Extracellular" evidence="2">
    <location>
        <begin position="128"/>
        <end position="429"/>
    </location>
</feature>
<feature type="transmembrane region" description="Helical; Note=Internal signal sequence" evidence="2">
    <location>
        <begin position="430"/>
        <end position="450"/>
    </location>
</feature>
<feature type="topological domain" description="Cytoplasmic" evidence="2">
    <location>
        <begin position="451"/>
        <end position="868"/>
    </location>
</feature>
<feature type="domain" description="Ig-like C2-type">
    <location>
        <begin position="253"/>
        <end position="348"/>
    </location>
</feature>
<feature type="domain" description="EGF-like" evidence="3">
    <location>
        <begin position="357"/>
        <end position="398"/>
    </location>
</feature>
<feature type="region of interest" description="Disordered" evidence="4">
    <location>
        <begin position="1"/>
        <end position="114"/>
    </location>
</feature>
<feature type="region of interest" description="Disordered" evidence="4">
    <location>
        <begin position="469"/>
        <end position="488"/>
    </location>
</feature>
<feature type="region of interest" description="Disordered" evidence="4">
    <location>
        <begin position="516"/>
        <end position="553"/>
    </location>
</feature>
<feature type="region of interest" description="Disordered" evidence="4">
    <location>
        <begin position="671"/>
        <end position="690"/>
    </location>
</feature>
<feature type="region of interest" description="Disordered" evidence="4">
    <location>
        <begin position="720"/>
        <end position="806"/>
    </location>
</feature>
<feature type="region of interest" description="Disordered" evidence="4">
    <location>
        <begin position="823"/>
        <end position="868"/>
    </location>
</feature>
<feature type="compositionally biased region" description="Low complexity" evidence="4">
    <location>
        <begin position="19"/>
        <end position="75"/>
    </location>
</feature>
<feature type="compositionally biased region" description="Pro residues" evidence="4">
    <location>
        <begin position="76"/>
        <end position="90"/>
    </location>
</feature>
<feature type="compositionally biased region" description="Low complexity" evidence="4">
    <location>
        <begin position="91"/>
        <end position="108"/>
    </location>
</feature>
<feature type="compositionally biased region" description="Low complexity" evidence="4">
    <location>
        <begin position="518"/>
        <end position="530"/>
    </location>
</feature>
<feature type="compositionally biased region" description="Basic and acidic residues" evidence="4">
    <location>
        <begin position="538"/>
        <end position="551"/>
    </location>
</feature>
<feature type="compositionally biased region" description="Low complexity" evidence="4">
    <location>
        <begin position="766"/>
        <end position="794"/>
    </location>
</feature>
<feature type="glycosylation site" description="N-linked (GlcNAc...) asparagine" evidence="2">
    <location>
        <position position="33"/>
    </location>
</feature>
<feature type="glycosylation site" description="N-linked (GlcNAc...) asparagine" evidence="2">
    <location>
        <position position="34"/>
    </location>
</feature>
<feature type="glycosylation site" description="N-linked (GlcNAc...) asparagine" evidence="2">
    <location>
        <position position="163"/>
    </location>
</feature>
<feature type="glycosylation site" description="N-linked (GlcNAc...) asparagine" evidence="2">
    <location>
        <position position="294"/>
    </location>
</feature>
<feature type="glycosylation site" description="N-linked (GlcNAc...) asparagine" evidence="2">
    <location>
        <position position="362"/>
    </location>
</feature>
<feature type="disulfide bond" evidence="1">
    <location>
        <begin position="273"/>
        <end position="327"/>
    </location>
</feature>
<feature type="disulfide bond" evidence="1">
    <location>
        <begin position="361"/>
        <end position="375"/>
    </location>
</feature>
<feature type="disulfide bond" evidence="1">
    <location>
        <begin position="369"/>
        <end position="386"/>
    </location>
</feature>
<feature type="disulfide bond" evidence="1">
    <location>
        <begin position="388"/>
        <end position="397"/>
    </location>
</feature>
<feature type="splice variant" id="VSP_003465" description="In isoform 7." evidence="6">
    <location>
        <begin position="1"/>
        <end position="108"/>
    </location>
</feature>
<feature type="splice variant" id="VSP_003466" description="In isoform 3." evidence="7">
    <original>PLV</original>
    <variation>FFF</variation>
    <location>
        <begin position="220"/>
        <end position="222"/>
    </location>
</feature>
<feature type="splice variant" id="VSP_003467" description="In isoform 5." evidence="7">
    <original>C</original>
    <variation>G</variation>
    <location>
        <position position="388"/>
    </location>
</feature>
<feature type="splice variant" id="VSP_003468" description="In isoform 5." evidence="7">
    <location>
        <begin position="389"/>
        <end position="868"/>
    </location>
</feature>
<feature type="splice variant" id="VSP_003470" description="In isoform 4." evidence="7">
    <original>NGFFGQRCLEKLPLRLYMPDPKQKHLGFELKE</original>
    <variation>VGYTGDRCQQFAMVNFSK</variation>
    <location>
        <begin position="390"/>
        <end position="421"/>
    </location>
</feature>
<feature type="splice variant" id="VSP_003469" description="In isoform 7." evidence="6">
    <original>NGFFGQRCLEKLPLRLYMPDPKQ</original>
    <variation>VGYTGDRCQQFAMVNFS</variation>
    <location>
        <begin position="390"/>
        <end position="412"/>
    </location>
</feature>
<feature type="splice variant" id="VSP_003472" description="In isoform 6." evidence="6">
    <original>HLGFELKEAEELYQKRVLTITGICVA</original>
    <variation>SVLWDTPGTGVSSSQWSTSPSTLDLN</variation>
    <location>
        <begin position="414"/>
        <end position="439"/>
    </location>
</feature>
<feature type="splice variant" id="VSP_003471" description="In isoform 2 and isoform 3." evidence="7">
    <location>
        <begin position="414"/>
        <end position="421"/>
    </location>
</feature>
<feature type="splice variant" id="VSP_003473" description="In isoform 6." evidence="6">
    <location>
        <begin position="440"/>
        <end position="868"/>
    </location>
</feature>
<feature type="sequence conflict" description="In Ref. 2." evidence="7" ref="2">
    <original>S</original>
    <variation>F</variation>
    <location>
        <position position="117"/>
    </location>
</feature>
<feature type="sequence conflict" description="In Ref. 2." evidence="7" ref="2">
    <original>R</original>
    <variation>H</variation>
    <location>
        <position position="724"/>
    </location>
</feature>
<gene>
    <name type="primary">Nrg2</name>
    <name type="synonym">Ntak</name>
</gene>
<protein>
    <recommendedName>
        <fullName>Pro-neuregulin-2, membrane-bound isoform</fullName>
        <shortName>Pro-NRG2</shortName>
    </recommendedName>
    <component>
        <recommendedName>
            <fullName>Neuregulin-2</fullName>
            <shortName>NRG-2</shortName>
        </recommendedName>
        <alternativeName>
            <fullName>Neural- and thymus-derived activator for ERBB kinases</fullName>
            <shortName>NTAK</shortName>
        </alternativeName>
    </component>
</protein>
<dbReference type="EMBL" id="D89995">
    <property type="protein sequence ID" value="BAA23344.1"/>
    <property type="molecule type" value="mRNA"/>
</dbReference>
<dbReference type="EMBL" id="D89996">
    <property type="protein sequence ID" value="BAA23345.1"/>
    <property type="molecule type" value="mRNA"/>
</dbReference>
<dbReference type="EMBL" id="D89997">
    <property type="protein sequence ID" value="BAA23346.1"/>
    <property type="molecule type" value="mRNA"/>
</dbReference>
<dbReference type="EMBL" id="D89998">
    <property type="protein sequence ID" value="BAA23347.1"/>
    <property type="molecule type" value="mRNA"/>
</dbReference>
<dbReference type="EMBL" id="AB001576">
    <property type="protein sequence ID" value="BAA23348.1"/>
    <property type="molecule type" value="mRNA"/>
</dbReference>
<dbReference type="PIR" id="JC5701">
    <property type="entry name" value="JC5701"/>
</dbReference>
<dbReference type="PIR" id="JC5702">
    <property type="entry name" value="JC5702"/>
</dbReference>
<dbReference type="RefSeq" id="NP_001129623.1">
    <property type="nucleotide sequence ID" value="NM_001136151.1"/>
</dbReference>
<dbReference type="SMR" id="O35569"/>
<dbReference type="BioGRID" id="268631">
    <property type="interactions" value="2"/>
</dbReference>
<dbReference type="FunCoup" id="O35569">
    <property type="interactions" value="205"/>
</dbReference>
<dbReference type="STRING" id="10116.ENSRNOP00000028713"/>
<dbReference type="GlyCosmos" id="O35569">
    <property type="glycosylation" value="5 sites, No reported glycans"/>
</dbReference>
<dbReference type="GlyGen" id="O35569">
    <property type="glycosylation" value="5 sites"/>
</dbReference>
<dbReference type="PhosphoSitePlus" id="O35569"/>
<dbReference type="PaxDb" id="10116-ENSRNOP00000025901"/>
<dbReference type="GeneID" id="432361"/>
<dbReference type="KEGG" id="rno:432361"/>
<dbReference type="UCSC" id="RGD:1303302">
    <molecule id="O35569-1"/>
    <property type="organism name" value="rat"/>
</dbReference>
<dbReference type="AGR" id="RGD:1303302"/>
<dbReference type="CTD" id="9542"/>
<dbReference type="RGD" id="1303302">
    <property type="gene designation" value="Nrg2"/>
</dbReference>
<dbReference type="eggNOG" id="ENOG502QRNM">
    <property type="taxonomic scope" value="Eukaryota"/>
</dbReference>
<dbReference type="InParanoid" id="O35569"/>
<dbReference type="PhylomeDB" id="O35569"/>
<dbReference type="Reactome" id="R-RNO-1227986">
    <property type="pathway name" value="Signaling by ERBB2"/>
</dbReference>
<dbReference type="Reactome" id="R-RNO-1236394">
    <property type="pathway name" value="Signaling by ERBB4"/>
</dbReference>
<dbReference type="Reactome" id="R-RNO-1250196">
    <property type="pathway name" value="SHC1 events in ERBB2 signaling"/>
</dbReference>
<dbReference type="Reactome" id="R-RNO-1250342">
    <property type="pathway name" value="PI3K events in ERBB4 signaling"/>
</dbReference>
<dbReference type="Reactome" id="R-RNO-1250347">
    <property type="pathway name" value="SHC1 events in ERBB4 signaling"/>
</dbReference>
<dbReference type="Reactome" id="R-RNO-1257604">
    <property type="pathway name" value="PIP3 activates AKT signaling"/>
</dbReference>
<dbReference type="Reactome" id="R-RNO-1306955">
    <property type="pathway name" value="GRB7 events in ERBB2 signaling"/>
</dbReference>
<dbReference type="Reactome" id="R-RNO-1358803">
    <property type="pathway name" value="Downregulation of ERBB2:ERBB3 signaling"/>
</dbReference>
<dbReference type="Reactome" id="R-RNO-1963640">
    <property type="pathway name" value="GRB2 events in ERBB2 signaling"/>
</dbReference>
<dbReference type="Reactome" id="R-RNO-1963642">
    <property type="pathway name" value="PI3K events in ERBB2 signaling"/>
</dbReference>
<dbReference type="Reactome" id="R-RNO-5673001">
    <property type="pathway name" value="RAF/MAP kinase cascade"/>
</dbReference>
<dbReference type="Reactome" id="R-RNO-6785631">
    <property type="pathway name" value="ERBB2 Regulates Cell Motility"/>
</dbReference>
<dbReference type="Reactome" id="R-RNO-6811558">
    <property type="pathway name" value="PI5P, PP2A and IER3 Regulate PI3K/AKT Signaling"/>
</dbReference>
<dbReference type="Reactome" id="R-RNO-8847993">
    <property type="pathway name" value="ERBB2 Activates PTK6 Signaling"/>
</dbReference>
<dbReference type="Reactome" id="R-RNO-8863795">
    <property type="pathway name" value="Downregulation of ERBB2 signaling"/>
</dbReference>
<dbReference type="PRO" id="PR:O35569"/>
<dbReference type="Proteomes" id="UP000002494">
    <property type="component" value="Unplaced"/>
</dbReference>
<dbReference type="GO" id="GO:0005615">
    <property type="term" value="C:extracellular space"/>
    <property type="evidence" value="ECO:0000314"/>
    <property type="project" value="MGI"/>
</dbReference>
<dbReference type="GO" id="GO:0098982">
    <property type="term" value="C:GABA-ergic synapse"/>
    <property type="evidence" value="ECO:0000314"/>
    <property type="project" value="SynGO"/>
</dbReference>
<dbReference type="GO" id="GO:0098978">
    <property type="term" value="C:glutamatergic synapse"/>
    <property type="evidence" value="ECO:0000314"/>
    <property type="project" value="SynGO"/>
</dbReference>
<dbReference type="GO" id="GO:0005886">
    <property type="term" value="C:plasma membrane"/>
    <property type="evidence" value="ECO:0007669"/>
    <property type="project" value="UniProtKB-SubCell"/>
</dbReference>
<dbReference type="GO" id="GO:0005006">
    <property type="term" value="F:epidermal growth factor receptor activity"/>
    <property type="evidence" value="ECO:0000314"/>
    <property type="project" value="RGD"/>
</dbReference>
<dbReference type="GO" id="GO:0005154">
    <property type="term" value="F:epidermal growth factor receptor binding"/>
    <property type="evidence" value="ECO:0000314"/>
    <property type="project" value="RGD"/>
</dbReference>
<dbReference type="GO" id="GO:0043125">
    <property type="term" value="F:ErbB-3 class receptor binding"/>
    <property type="evidence" value="ECO:0000314"/>
    <property type="project" value="RGD"/>
</dbReference>
<dbReference type="GO" id="GO:1990631">
    <property type="term" value="F:ErbB-4 class receptor binding"/>
    <property type="evidence" value="ECO:0000314"/>
    <property type="project" value="MGI"/>
</dbReference>
<dbReference type="GO" id="GO:0008083">
    <property type="term" value="F:growth factor activity"/>
    <property type="evidence" value="ECO:0007669"/>
    <property type="project" value="UniProtKB-KW"/>
</dbReference>
<dbReference type="GO" id="GO:0048018">
    <property type="term" value="F:receptor ligand activity"/>
    <property type="evidence" value="ECO:0000314"/>
    <property type="project" value="MGI"/>
</dbReference>
<dbReference type="GO" id="GO:0005102">
    <property type="term" value="F:signaling receptor binding"/>
    <property type="evidence" value="ECO:0000318"/>
    <property type="project" value="GO_Central"/>
</dbReference>
<dbReference type="GO" id="GO:0007166">
    <property type="term" value="P:cell surface receptor signaling pathway"/>
    <property type="evidence" value="ECO:0000266"/>
    <property type="project" value="RGD"/>
</dbReference>
<dbReference type="GO" id="GO:0007173">
    <property type="term" value="P:epidermal growth factor receptor signaling pathway"/>
    <property type="evidence" value="ECO:0000314"/>
    <property type="project" value="RGD"/>
</dbReference>
<dbReference type="GO" id="GO:0038133">
    <property type="term" value="P:ERBB2-ERBB3 signaling pathway"/>
    <property type="evidence" value="ECO:0000266"/>
    <property type="project" value="RGD"/>
</dbReference>
<dbReference type="GO" id="GO:0038130">
    <property type="term" value="P:ERBB4 signaling pathway"/>
    <property type="evidence" value="ECO:0000314"/>
    <property type="project" value="MGI"/>
</dbReference>
<dbReference type="GO" id="GO:0038138">
    <property type="term" value="P:ERBB4-ERBB4 signaling pathway"/>
    <property type="evidence" value="ECO:0000266"/>
    <property type="project" value="RGD"/>
</dbReference>
<dbReference type="GO" id="GO:0035556">
    <property type="term" value="P:intracellular signal transduction"/>
    <property type="evidence" value="ECO:0000318"/>
    <property type="project" value="GO_Central"/>
</dbReference>
<dbReference type="GO" id="GO:0007399">
    <property type="term" value="P:nervous system development"/>
    <property type="evidence" value="ECO:0007669"/>
    <property type="project" value="InterPro"/>
</dbReference>
<dbReference type="GO" id="GO:0051963">
    <property type="term" value="P:regulation of synapse assembly"/>
    <property type="evidence" value="ECO:0000314"/>
    <property type="project" value="SynGO"/>
</dbReference>
<dbReference type="GO" id="GO:0090128">
    <property type="term" value="P:regulation of synapse maturation"/>
    <property type="evidence" value="ECO:0000314"/>
    <property type="project" value="SynGO"/>
</dbReference>
<dbReference type="CDD" id="cd05750">
    <property type="entry name" value="Ig_Pro_neuregulin"/>
    <property type="match status" value="1"/>
</dbReference>
<dbReference type="FunFam" id="2.60.40.10:FF:000354">
    <property type="entry name" value="Pro-neuregulin-2, membrane-bound isoform"/>
    <property type="match status" value="1"/>
</dbReference>
<dbReference type="FunFam" id="2.10.25.10:FF:000116">
    <property type="entry name" value="pro-neuregulin-2, membrane-bound isoform"/>
    <property type="match status" value="1"/>
</dbReference>
<dbReference type="Gene3D" id="2.60.40.10">
    <property type="entry name" value="Immunoglobulins"/>
    <property type="match status" value="1"/>
</dbReference>
<dbReference type="Gene3D" id="2.10.25.10">
    <property type="entry name" value="Laminin"/>
    <property type="match status" value="1"/>
</dbReference>
<dbReference type="InterPro" id="IPR000742">
    <property type="entry name" value="EGF-like_dom"/>
</dbReference>
<dbReference type="InterPro" id="IPR007110">
    <property type="entry name" value="Ig-like_dom"/>
</dbReference>
<dbReference type="InterPro" id="IPR036179">
    <property type="entry name" value="Ig-like_dom_sf"/>
</dbReference>
<dbReference type="InterPro" id="IPR013783">
    <property type="entry name" value="Ig-like_fold"/>
</dbReference>
<dbReference type="InterPro" id="IPR013098">
    <property type="entry name" value="Ig_I-set"/>
</dbReference>
<dbReference type="InterPro" id="IPR003599">
    <property type="entry name" value="Ig_sub"/>
</dbReference>
<dbReference type="InterPro" id="IPR003598">
    <property type="entry name" value="Ig_sub2"/>
</dbReference>
<dbReference type="InterPro" id="IPR040180">
    <property type="entry name" value="Neuregulin"/>
</dbReference>
<dbReference type="InterPro" id="IPR002154">
    <property type="entry name" value="Neuregulin_C"/>
</dbReference>
<dbReference type="PANTHER" id="PTHR11100">
    <property type="entry name" value="HEREGULIN-NEUREGULIN FAMILY MEMBER"/>
    <property type="match status" value="1"/>
</dbReference>
<dbReference type="PANTHER" id="PTHR11100:SF20">
    <property type="entry name" value="PRO-NEUREGULIN-2, MEMBRANE-BOUND ISOFORM"/>
    <property type="match status" value="1"/>
</dbReference>
<dbReference type="Pfam" id="PF07679">
    <property type="entry name" value="I-set"/>
    <property type="match status" value="1"/>
</dbReference>
<dbReference type="Pfam" id="PF02158">
    <property type="entry name" value="Neuregulin"/>
    <property type="match status" value="1"/>
</dbReference>
<dbReference type="SMART" id="SM00409">
    <property type="entry name" value="IG"/>
    <property type="match status" value="1"/>
</dbReference>
<dbReference type="SMART" id="SM00408">
    <property type="entry name" value="IGc2"/>
    <property type="match status" value="1"/>
</dbReference>
<dbReference type="SUPFAM" id="SSF57196">
    <property type="entry name" value="EGF/Laminin"/>
    <property type="match status" value="1"/>
</dbReference>
<dbReference type="SUPFAM" id="SSF48726">
    <property type="entry name" value="Immunoglobulin"/>
    <property type="match status" value="1"/>
</dbReference>
<dbReference type="PROSITE" id="PS00022">
    <property type="entry name" value="EGF_1"/>
    <property type="match status" value="1"/>
</dbReference>
<dbReference type="PROSITE" id="PS01186">
    <property type="entry name" value="EGF_2"/>
    <property type="match status" value="1"/>
</dbReference>
<dbReference type="PROSITE" id="PS50026">
    <property type="entry name" value="EGF_3"/>
    <property type="match status" value="1"/>
</dbReference>
<dbReference type="PROSITE" id="PS50835">
    <property type="entry name" value="IG_LIKE"/>
    <property type="match status" value="1"/>
</dbReference>
<organism>
    <name type="scientific">Rattus norvegicus</name>
    <name type="common">Rat</name>
    <dbReference type="NCBI Taxonomy" id="10116"/>
    <lineage>
        <taxon>Eukaryota</taxon>
        <taxon>Metazoa</taxon>
        <taxon>Chordata</taxon>
        <taxon>Craniata</taxon>
        <taxon>Vertebrata</taxon>
        <taxon>Euteleostomi</taxon>
        <taxon>Mammalia</taxon>
        <taxon>Eutheria</taxon>
        <taxon>Euarchontoglires</taxon>
        <taxon>Glires</taxon>
        <taxon>Rodentia</taxon>
        <taxon>Myomorpha</taxon>
        <taxon>Muroidea</taxon>
        <taxon>Muridae</taxon>
        <taxon>Murinae</taxon>
        <taxon>Rattus</taxon>
    </lineage>
</organism>
<sequence length="868" mass="93777">MRQVCCSALPPPLEKARCSSYSYSDSSSSSSSNNSSSSTSSRSSSRSSSRSSRGSTTTTSSSENSGSNSGSIFRPAAPPEPRPQPQPQPRSPAARRAAARSRAAAAGGMRRDPAPGSSMLLFGVSLACYSPSLKSVQDQAYKAPVVVEGKVQGLAPAGGSSSNSTREPPASGRVALVKVLDKWPLRSGGLQREQVISVGSCAPLERNQRYIFFLEPTEQPLVFKTAFAPVDPNGKNIKKEVGKILCTDCATRPKLKKMKSQTGEVGEKQSLKCEAAAGNPQPSYRWFKDGKELNRSRDIRIKYGNGRKNSRLQFNKVKVEDAGEYVCEAENILGKDTVRGRLHVNSVSTTLSSWSGHARKCNETAKSYCVNGGVCYYIEGINQLSCKCPNGFFGQRCLEKLPLRLYMPDPKQKHLGFELKEAEELYQKRVLTITGICVALLVVGIVCVVAYCKTKKQRRQMHHHLRQNMCPAHQNRSLANGPSHPRLDPEEIQMADYISKNVPATDHVIRREAETTFSGSHSCSPSHHCSTATPTSSHRHESHTWSLERSESLTSDSQSGIMLSSVGTSKCNSPACVEARARRAAAYSQEERRRAAMPPYHDSIDSLRDSPHSERYVSALTTPARLSPVDFHYSLATQVPTFEITSPNSAHAVSLPPAAPISYRLAEQQPLLRHPAPPGPGPGPGADMQRSYDSYYYPAAGPGPRRGACALGGSLGSLPASPFRIPEDDEYETTQECAPPPPPRPRTRGASRRTSAGPRRWRRSRLNGLAAQRARAARDSLSLSSGSGCGSASASDDDADDADGALAAESTPFLGLRAAHDALRSDSPPLCPAADSRTYYSLDSHSTRASSRHSRGPPTRAKQDSGPL</sequence>
<reference key="1">
    <citation type="journal article" date="1997" name="J. Biochem.">
        <title>A novel brain-derived member of the epidermal growth factor family that interacts with ErbB3 and ErbB4.</title>
        <authorList>
            <person name="Higashiyama S."/>
            <person name="Horikawa M."/>
            <person name="Yamada K."/>
            <person name="Ichino N."/>
            <person name="Nakano N."/>
            <person name="Nakagawa T."/>
            <person name="Miyagawa J."/>
            <person name="Matsushita N."/>
            <person name="Nagatsu T."/>
            <person name="Taniguchi N."/>
            <person name="Ishiguro H."/>
        </authorList>
    </citation>
    <scope>NUCLEOTIDE SEQUENCE [MRNA]</scope>
    <scope>PROTEIN SEQUENCE OF 128-162</scope>
    <scope>ALTERNATIVE SPLICING</scope>
</reference>
<reference key="2">
    <citation type="journal article" date="1997" name="Nature">
        <title>Ligands for ErbB-family receptors encoded by a neuregulin-like gene.</title>
        <authorList>
            <person name="Chang H."/>
            <person name="Riese D.J. II"/>
            <person name="Gilbert W."/>
            <person name="Stern D.F."/>
            <person name="McMahan U.J."/>
        </authorList>
    </citation>
    <scope>NUCLEOTIDE SEQUENCE [MRNA] OF 109-868 (ISOFORMS 6 AND 7)</scope>
    <source>
        <tissue>Cerebellum</tissue>
    </source>
</reference>
<name>NRG2_RAT</name>